<sequence>MQEQYRPQDIEQKVQEHWDNNKTFVVNEDPNKEKFYCLSMFPYPSGRLHMGHVRNYTIGDVVSRYQRLQGKNVMQPIGWDAFGLPAENAAVKNKTAPAPWTYENIEYMKNQLKLLGFGYDWSREFATCTPEYYRWEQEFFTKLYNKGLVYKKTSSVNWCPNDQTVLANEQVEDGCCWRCDTPVEQKKIPQWFIKITEYAQELLDDLDTLDGWPEMVKTMQRNWIGRSEGVELSFAVNGEEAPLEVYTTRPDTLMGVTYVGIAAGHPLAEKAAATNPELFAFTEECRNTKVAEAELATMEKKGMDTGLRAVHPLNGREVPIYVANFVLMDYGTGAVMAVPAHDQRDYEFATKYGLDIIPVIKPEDGSELNVSEEAYTEKGVLFDSGEFDGLAFQDAFDAIAAKLEAEGKGKKTVNFRLRDWGVSRQRYWGAPIPMVTTEDGEVHPVPADQLPVILPENVVMDGVTSPIKADKEWAKTTFNGEPALRETDTFDTFMESSWYYARYCSPQADDILDPEKANYWLPVDQYVGGIEHACMHLLYSRFFHKLLRDAGYVTSNEPFKQLLCQGMVLADAFHHTNEKGTKEWIAPTDVTIERDAKGRIEKAIDDQGREVQHSGMIKMSKSKNNGIDPQEMVDKFGADTVRLFMMFASPADMTLEWQESGVEGASRFLKRVWKLVHEHTNKGTVEALDVAALSGNQKALRRDVHKTIAKVSDDIGRRQTFNTAIAAIMELMNKLNKAPQESAQDRALLDEALKAVVVMLYPMTPHASFEMWEALGETDIDTATWPTFDKNALIEDEKTIVVMINGKLRAKLIVAADATEEQVKELGLKDENAIKFLDGLTIRKVIYVPGKLLNIVAN</sequence>
<reference key="1">
    <citation type="journal article" date="2005" name="Science">
        <title>Life at depth: Photobacterium profundum genome sequence and expression analysis.</title>
        <authorList>
            <person name="Vezzi A."/>
            <person name="Campanaro S."/>
            <person name="D'Angelo M."/>
            <person name="Simonato F."/>
            <person name="Vitulo N."/>
            <person name="Lauro F.M."/>
            <person name="Cestaro A."/>
            <person name="Malacrida G."/>
            <person name="Simionati B."/>
            <person name="Cannata N."/>
            <person name="Romualdi C."/>
            <person name="Bartlett D.H."/>
            <person name="Valle G."/>
        </authorList>
    </citation>
    <scope>NUCLEOTIDE SEQUENCE [LARGE SCALE GENOMIC DNA]</scope>
    <source>
        <strain>ATCC BAA-1253 / SS9</strain>
    </source>
</reference>
<gene>
    <name evidence="1" type="primary">leuS</name>
    <name type="ordered locus">PBPRA2885</name>
</gene>
<dbReference type="EC" id="6.1.1.4" evidence="1"/>
<dbReference type="EMBL" id="CR378672">
    <property type="protein sequence ID" value="CAG21228.1"/>
    <property type="molecule type" value="Genomic_DNA"/>
</dbReference>
<dbReference type="RefSeq" id="WP_011219500.1">
    <property type="nucleotide sequence ID" value="NC_006370.1"/>
</dbReference>
<dbReference type="SMR" id="Q6LN98"/>
<dbReference type="STRING" id="298386.PBPRA2885"/>
<dbReference type="KEGG" id="ppr:PBPRA2885"/>
<dbReference type="eggNOG" id="COG0495">
    <property type="taxonomic scope" value="Bacteria"/>
</dbReference>
<dbReference type="HOGENOM" id="CLU_004427_0_0_6"/>
<dbReference type="Proteomes" id="UP000000593">
    <property type="component" value="Chromosome 1"/>
</dbReference>
<dbReference type="GO" id="GO:0005829">
    <property type="term" value="C:cytosol"/>
    <property type="evidence" value="ECO:0007669"/>
    <property type="project" value="TreeGrafter"/>
</dbReference>
<dbReference type="GO" id="GO:0002161">
    <property type="term" value="F:aminoacyl-tRNA deacylase activity"/>
    <property type="evidence" value="ECO:0007669"/>
    <property type="project" value="InterPro"/>
</dbReference>
<dbReference type="GO" id="GO:0005524">
    <property type="term" value="F:ATP binding"/>
    <property type="evidence" value="ECO:0007669"/>
    <property type="project" value="UniProtKB-UniRule"/>
</dbReference>
<dbReference type="GO" id="GO:0004823">
    <property type="term" value="F:leucine-tRNA ligase activity"/>
    <property type="evidence" value="ECO:0007669"/>
    <property type="project" value="UniProtKB-UniRule"/>
</dbReference>
<dbReference type="GO" id="GO:0006429">
    <property type="term" value="P:leucyl-tRNA aminoacylation"/>
    <property type="evidence" value="ECO:0007669"/>
    <property type="project" value="UniProtKB-UniRule"/>
</dbReference>
<dbReference type="CDD" id="cd07958">
    <property type="entry name" value="Anticodon_Ia_Leu_BEm"/>
    <property type="match status" value="1"/>
</dbReference>
<dbReference type="CDD" id="cd00812">
    <property type="entry name" value="LeuRS_core"/>
    <property type="match status" value="1"/>
</dbReference>
<dbReference type="FunFam" id="1.10.730.10:FF:000002">
    <property type="entry name" value="Leucine--tRNA ligase"/>
    <property type="match status" value="2"/>
</dbReference>
<dbReference type="FunFam" id="2.20.28.290:FF:000001">
    <property type="entry name" value="Leucine--tRNA ligase"/>
    <property type="match status" value="1"/>
</dbReference>
<dbReference type="FunFam" id="3.10.20.590:FF:000001">
    <property type="entry name" value="Leucine--tRNA ligase"/>
    <property type="match status" value="1"/>
</dbReference>
<dbReference type="FunFam" id="3.40.50.620:FF:000003">
    <property type="entry name" value="Leucine--tRNA ligase"/>
    <property type="match status" value="1"/>
</dbReference>
<dbReference type="FunFam" id="3.40.50.620:FF:000051">
    <property type="entry name" value="Leucine--tRNA ligase"/>
    <property type="match status" value="1"/>
</dbReference>
<dbReference type="FunFam" id="3.90.740.10:FF:000012">
    <property type="entry name" value="Leucine--tRNA ligase"/>
    <property type="match status" value="1"/>
</dbReference>
<dbReference type="Gene3D" id="2.20.28.290">
    <property type="match status" value="1"/>
</dbReference>
<dbReference type="Gene3D" id="3.10.20.590">
    <property type="match status" value="1"/>
</dbReference>
<dbReference type="Gene3D" id="3.40.50.620">
    <property type="entry name" value="HUPs"/>
    <property type="match status" value="2"/>
</dbReference>
<dbReference type="Gene3D" id="1.10.730.10">
    <property type="entry name" value="Isoleucyl-tRNA Synthetase, Domain 1"/>
    <property type="match status" value="1"/>
</dbReference>
<dbReference type="Gene3D" id="3.90.740.10">
    <property type="entry name" value="Valyl/Leucyl/Isoleucyl-tRNA synthetase, editing domain"/>
    <property type="match status" value="1"/>
</dbReference>
<dbReference type="HAMAP" id="MF_00049_B">
    <property type="entry name" value="Leu_tRNA_synth_B"/>
    <property type="match status" value="1"/>
</dbReference>
<dbReference type="InterPro" id="IPR001412">
    <property type="entry name" value="aa-tRNA-synth_I_CS"/>
</dbReference>
<dbReference type="InterPro" id="IPR002300">
    <property type="entry name" value="aa-tRNA-synth_Ia"/>
</dbReference>
<dbReference type="InterPro" id="IPR002302">
    <property type="entry name" value="Leu-tRNA-ligase"/>
</dbReference>
<dbReference type="InterPro" id="IPR025709">
    <property type="entry name" value="Leu_tRNA-synth_edit"/>
</dbReference>
<dbReference type="InterPro" id="IPR013155">
    <property type="entry name" value="M/V/L/I-tRNA-synth_anticd-bd"/>
</dbReference>
<dbReference type="InterPro" id="IPR015413">
    <property type="entry name" value="Methionyl/Leucyl_tRNA_Synth"/>
</dbReference>
<dbReference type="InterPro" id="IPR014729">
    <property type="entry name" value="Rossmann-like_a/b/a_fold"/>
</dbReference>
<dbReference type="InterPro" id="IPR009080">
    <property type="entry name" value="tRNAsynth_Ia_anticodon-bd"/>
</dbReference>
<dbReference type="InterPro" id="IPR009008">
    <property type="entry name" value="Val/Leu/Ile-tRNA-synth_edit"/>
</dbReference>
<dbReference type="NCBIfam" id="TIGR00396">
    <property type="entry name" value="leuS_bact"/>
    <property type="match status" value="1"/>
</dbReference>
<dbReference type="PANTHER" id="PTHR43740:SF2">
    <property type="entry name" value="LEUCINE--TRNA LIGASE, MITOCHONDRIAL"/>
    <property type="match status" value="1"/>
</dbReference>
<dbReference type="PANTHER" id="PTHR43740">
    <property type="entry name" value="LEUCYL-TRNA SYNTHETASE"/>
    <property type="match status" value="1"/>
</dbReference>
<dbReference type="Pfam" id="PF08264">
    <property type="entry name" value="Anticodon_1"/>
    <property type="match status" value="1"/>
</dbReference>
<dbReference type="Pfam" id="PF00133">
    <property type="entry name" value="tRNA-synt_1"/>
    <property type="match status" value="2"/>
</dbReference>
<dbReference type="Pfam" id="PF13603">
    <property type="entry name" value="tRNA-synt_1_2"/>
    <property type="match status" value="1"/>
</dbReference>
<dbReference type="Pfam" id="PF09334">
    <property type="entry name" value="tRNA-synt_1g"/>
    <property type="match status" value="1"/>
</dbReference>
<dbReference type="PRINTS" id="PR00985">
    <property type="entry name" value="TRNASYNTHLEU"/>
</dbReference>
<dbReference type="SUPFAM" id="SSF47323">
    <property type="entry name" value="Anticodon-binding domain of a subclass of class I aminoacyl-tRNA synthetases"/>
    <property type="match status" value="1"/>
</dbReference>
<dbReference type="SUPFAM" id="SSF52374">
    <property type="entry name" value="Nucleotidylyl transferase"/>
    <property type="match status" value="1"/>
</dbReference>
<dbReference type="SUPFAM" id="SSF50677">
    <property type="entry name" value="ValRS/IleRS/LeuRS editing domain"/>
    <property type="match status" value="1"/>
</dbReference>
<dbReference type="PROSITE" id="PS00178">
    <property type="entry name" value="AA_TRNA_LIGASE_I"/>
    <property type="match status" value="1"/>
</dbReference>
<keyword id="KW-0030">Aminoacyl-tRNA synthetase</keyword>
<keyword id="KW-0067">ATP-binding</keyword>
<keyword id="KW-0963">Cytoplasm</keyword>
<keyword id="KW-0436">Ligase</keyword>
<keyword id="KW-0547">Nucleotide-binding</keyword>
<keyword id="KW-0648">Protein biosynthesis</keyword>
<keyword id="KW-1185">Reference proteome</keyword>
<accession>Q6LN98</accession>
<protein>
    <recommendedName>
        <fullName evidence="1">Leucine--tRNA ligase</fullName>
        <ecNumber evidence="1">6.1.1.4</ecNumber>
    </recommendedName>
    <alternativeName>
        <fullName evidence="1">Leucyl-tRNA synthetase</fullName>
        <shortName evidence="1">LeuRS</shortName>
    </alternativeName>
</protein>
<proteinExistence type="inferred from homology"/>
<comment type="catalytic activity">
    <reaction evidence="1">
        <text>tRNA(Leu) + L-leucine + ATP = L-leucyl-tRNA(Leu) + AMP + diphosphate</text>
        <dbReference type="Rhea" id="RHEA:11688"/>
        <dbReference type="Rhea" id="RHEA-COMP:9613"/>
        <dbReference type="Rhea" id="RHEA-COMP:9622"/>
        <dbReference type="ChEBI" id="CHEBI:30616"/>
        <dbReference type="ChEBI" id="CHEBI:33019"/>
        <dbReference type="ChEBI" id="CHEBI:57427"/>
        <dbReference type="ChEBI" id="CHEBI:78442"/>
        <dbReference type="ChEBI" id="CHEBI:78494"/>
        <dbReference type="ChEBI" id="CHEBI:456215"/>
        <dbReference type="EC" id="6.1.1.4"/>
    </reaction>
</comment>
<comment type="subcellular location">
    <subcellularLocation>
        <location evidence="1">Cytoplasm</location>
    </subcellularLocation>
</comment>
<comment type="similarity">
    <text evidence="1">Belongs to the class-I aminoacyl-tRNA synthetase family.</text>
</comment>
<organism>
    <name type="scientific">Photobacterium profundum (strain SS9)</name>
    <dbReference type="NCBI Taxonomy" id="298386"/>
    <lineage>
        <taxon>Bacteria</taxon>
        <taxon>Pseudomonadati</taxon>
        <taxon>Pseudomonadota</taxon>
        <taxon>Gammaproteobacteria</taxon>
        <taxon>Vibrionales</taxon>
        <taxon>Vibrionaceae</taxon>
        <taxon>Photobacterium</taxon>
    </lineage>
</organism>
<name>SYL_PHOPR</name>
<feature type="chain" id="PRO_0000152061" description="Leucine--tRNA ligase">
    <location>
        <begin position="1"/>
        <end position="858"/>
    </location>
</feature>
<feature type="short sequence motif" description="'HIGH' region">
    <location>
        <begin position="42"/>
        <end position="52"/>
    </location>
</feature>
<feature type="short sequence motif" description="'KMSKS' region">
    <location>
        <begin position="618"/>
        <end position="622"/>
    </location>
</feature>
<feature type="binding site" evidence="1">
    <location>
        <position position="621"/>
    </location>
    <ligand>
        <name>ATP</name>
        <dbReference type="ChEBI" id="CHEBI:30616"/>
    </ligand>
</feature>
<evidence type="ECO:0000255" key="1">
    <source>
        <dbReference type="HAMAP-Rule" id="MF_00049"/>
    </source>
</evidence>